<feature type="chain" id="PRO_0000233379" description="N-acylneuraminate-9-phosphatase">
    <location>
        <begin position="1"/>
        <end position="248"/>
    </location>
</feature>
<feature type="binding site" evidence="1">
    <location>
        <position position="12"/>
    </location>
    <ligand>
        <name>Mg(2+)</name>
        <dbReference type="ChEBI" id="CHEBI:18420"/>
    </ligand>
</feature>
<feature type="binding site" evidence="1">
    <location>
        <position position="13"/>
    </location>
    <ligand>
        <name>phosphate</name>
        <dbReference type="ChEBI" id="CHEBI:43474"/>
    </ligand>
</feature>
<feature type="binding site" evidence="1">
    <location>
        <position position="14"/>
    </location>
    <ligand>
        <name>Mg(2+)</name>
        <dbReference type="ChEBI" id="CHEBI:18420"/>
    </ligand>
</feature>
<feature type="binding site" evidence="1">
    <location>
        <position position="14"/>
    </location>
    <ligand>
        <name>phosphate</name>
        <dbReference type="ChEBI" id="CHEBI:43474"/>
    </ligand>
</feature>
<feature type="binding site" evidence="1">
    <location>
        <position position="131"/>
    </location>
    <ligand>
        <name>phosphate</name>
        <dbReference type="ChEBI" id="CHEBI:43474"/>
    </ligand>
</feature>
<feature type="binding site" evidence="1">
    <location>
        <position position="132"/>
    </location>
    <ligand>
        <name>phosphate</name>
        <dbReference type="ChEBI" id="CHEBI:43474"/>
    </ligand>
</feature>
<feature type="binding site" evidence="1">
    <location>
        <position position="164"/>
    </location>
    <ligand>
        <name>phosphate</name>
        <dbReference type="ChEBI" id="CHEBI:43474"/>
    </ligand>
</feature>
<feature type="binding site" evidence="1">
    <location>
        <position position="189"/>
    </location>
    <ligand>
        <name>Mg(2+)</name>
        <dbReference type="ChEBI" id="CHEBI:18420"/>
    </ligand>
</feature>
<accession>Q5M969</accession>
<reference key="1">
    <citation type="journal article" date="2004" name="Genome Res.">
        <title>The status, quality, and expansion of the NIH full-length cDNA project: the Mammalian Gene Collection (MGC).</title>
        <authorList>
            <consortium name="The MGC Project Team"/>
        </authorList>
    </citation>
    <scope>NUCLEOTIDE SEQUENCE [LARGE SCALE MRNA]</scope>
    <source>
        <tissue>Brain</tissue>
    </source>
</reference>
<reference key="2">
    <citation type="journal article" date="2006" name="Glycobiology">
        <title>Identification of the sequence encoding N-acetylneuraminate-9-phosphate phosphatase.</title>
        <authorList>
            <person name="Maliekal P."/>
            <person name="Vertommen D."/>
            <person name="Delpierre G."/>
            <person name="Van Schaftingen E."/>
        </authorList>
    </citation>
    <scope>IDENTIFICATION BY MASS SPECTROMETRY</scope>
    <scope>CATALYTIC ACTIVITY</scope>
    <scope>COFACTOR</scope>
    <scope>ACTIVITY REGULATION</scope>
</reference>
<comment type="function">
    <text evidence="1 2">Catalyzes the dephosphorylation of N-acylneuraminate 9-phosphate (Neu5Ac-9-P) to N-acetylneuraminic acid (Neu5Ac or sialic acid) (PubMed:16237198). Can also use N-glycoloylneuraminate 9-phosphate as substrate (By similarity).</text>
</comment>
<comment type="catalytic activity">
    <reaction evidence="2">
        <text>N-acetylneuraminate 9-phosphate + H2O = N-acetylneuraminate + phosphate</text>
        <dbReference type="Rhea" id="RHEA:80839"/>
        <dbReference type="ChEBI" id="CHEBI:15377"/>
        <dbReference type="ChEBI" id="CHEBI:35418"/>
        <dbReference type="ChEBI" id="CHEBI:43474"/>
        <dbReference type="ChEBI" id="CHEBI:231734"/>
        <dbReference type="EC" id="3.1.3.29"/>
    </reaction>
    <physiologicalReaction direction="left-to-right" evidence="5">
        <dbReference type="Rhea" id="RHEA:80840"/>
    </physiologicalReaction>
</comment>
<comment type="catalytic activity">
    <reaction evidence="1">
        <text>N-glycoloylneuraminate 9-phosphate + H2O = N-glycoloylneuraminate + phosphate</text>
        <dbReference type="Rhea" id="RHEA:83303"/>
        <dbReference type="ChEBI" id="CHEBI:15377"/>
        <dbReference type="ChEBI" id="CHEBI:29025"/>
        <dbReference type="ChEBI" id="CHEBI:43474"/>
        <dbReference type="ChEBI" id="CHEBI:232623"/>
    </reaction>
    <physiologicalReaction direction="left-to-right" evidence="1">
        <dbReference type="Rhea" id="RHEA:83304"/>
    </physiologicalReaction>
</comment>
<comment type="cofactor">
    <cofactor evidence="2">
        <name>Mg(2+)</name>
        <dbReference type="ChEBI" id="CHEBI:18420"/>
    </cofactor>
</comment>
<comment type="activity regulation">
    <text evidence="1 2">Inhibited by calcium (PubMed:16237198). Inhibited by vanadate, sodium orthovanadate and phosphonate (By similarity) (PubMed:16237198).</text>
</comment>
<comment type="pathway">
    <text>Amino-sugar metabolism; N-acetylneuraminate biosynthesis.</text>
</comment>
<comment type="similarity">
    <text evidence="4">Belongs to the HAD-like hydrolase superfamily. NANP family.</text>
</comment>
<gene>
    <name evidence="6" type="primary">Nanp</name>
    <name type="synonym">Hdhd4</name>
</gene>
<evidence type="ECO:0000250" key="1">
    <source>
        <dbReference type="UniProtKB" id="Q8TBE9"/>
    </source>
</evidence>
<evidence type="ECO:0000269" key="2">
    <source>
    </source>
</evidence>
<evidence type="ECO:0000303" key="3">
    <source>
    </source>
</evidence>
<evidence type="ECO:0000305" key="4"/>
<evidence type="ECO:0000305" key="5">
    <source>
    </source>
</evidence>
<evidence type="ECO:0000312" key="6">
    <source>
        <dbReference type="RGD" id="1306009"/>
    </source>
</evidence>
<dbReference type="EC" id="3.1.3.29" evidence="2"/>
<dbReference type="EMBL" id="BC087587">
    <property type="protein sequence ID" value="AAH87587.1"/>
    <property type="molecule type" value="mRNA"/>
</dbReference>
<dbReference type="RefSeq" id="NP_001009409.1">
    <property type="nucleotide sequence ID" value="NM_001009409.1"/>
</dbReference>
<dbReference type="SMR" id="Q5M969"/>
<dbReference type="FunCoup" id="Q5M969">
    <property type="interactions" value="1166"/>
</dbReference>
<dbReference type="STRING" id="10116.ENSRNOP00000011315"/>
<dbReference type="PhosphoSitePlus" id="Q5M969"/>
<dbReference type="PaxDb" id="10116-ENSRNOP00000011315"/>
<dbReference type="Ensembl" id="ENSRNOT00000011315.5">
    <property type="protein sequence ID" value="ENSRNOP00000011315.3"/>
    <property type="gene ID" value="ENSRNOG00000008307.5"/>
</dbReference>
<dbReference type="GeneID" id="311530"/>
<dbReference type="KEGG" id="rno:311530"/>
<dbReference type="UCSC" id="RGD:1306009">
    <property type="organism name" value="rat"/>
</dbReference>
<dbReference type="AGR" id="RGD:1306009"/>
<dbReference type="CTD" id="140838"/>
<dbReference type="RGD" id="1306009">
    <property type="gene designation" value="Nanp"/>
</dbReference>
<dbReference type="eggNOG" id="KOG3085">
    <property type="taxonomic scope" value="Eukaryota"/>
</dbReference>
<dbReference type="GeneTree" id="ENSGT00390000003094"/>
<dbReference type="HOGENOM" id="CLU_045011_8_2_1"/>
<dbReference type="InParanoid" id="Q5M969"/>
<dbReference type="OMA" id="PQETHDT"/>
<dbReference type="OrthoDB" id="1694274at2759"/>
<dbReference type="PhylomeDB" id="Q5M969"/>
<dbReference type="TreeFam" id="TF324589"/>
<dbReference type="BioCyc" id="MetaCyc:MONOMER-14517"/>
<dbReference type="Reactome" id="R-RNO-4085001">
    <property type="pathway name" value="Sialic acid metabolism"/>
</dbReference>
<dbReference type="SABIO-RK" id="Q5M969"/>
<dbReference type="UniPathway" id="UPA00630"/>
<dbReference type="PRO" id="PR:Q5M969"/>
<dbReference type="Proteomes" id="UP000002494">
    <property type="component" value="Chromosome 3"/>
</dbReference>
<dbReference type="Bgee" id="ENSRNOG00000008307">
    <property type="expression patterns" value="Expressed in liver and 18 other cell types or tissues"/>
</dbReference>
<dbReference type="GO" id="GO:0005829">
    <property type="term" value="C:cytosol"/>
    <property type="evidence" value="ECO:0000314"/>
    <property type="project" value="FlyBase"/>
</dbReference>
<dbReference type="GO" id="GO:0050124">
    <property type="term" value="F:N-acylneuraminate-9-phosphatase activity"/>
    <property type="evidence" value="ECO:0000314"/>
    <property type="project" value="UniProtKB"/>
</dbReference>
<dbReference type="GO" id="GO:0006055">
    <property type="term" value="P:CMP-N-acetylneuraminate biosynthetic process"/>
    <property type="evidence" value="ECO:0000266"/>
    <property type="project" value="RGD"/>
</dbReference>
<dbReference type="GO" id="GO:0070085">
    <property type="term" value="P:glycosylation"/>
    <property type="evidence" value="ECO:0000266"/>
    <property type="project" value="RGD"/>
</dbReference>
<dbReference type="GO" id="GO:0006045">
    <property type="term" value="P:N-acetylglucosamine biosynthetic process"/>
    <property type="evidence" value="ECO:0007669"/>
    <property type="project" value="UniProtKB-UniPathway"/>
</dbReference>
<dbReference type="GO" id="GO:0046380">
    <property type="term" value="P:N-acetylneuraminate biosynthetic process"/>
    <property type="evidence" value="ECO:0000314"/>
    <property type="project" value="UniProtKB"/>
</dbReference>
<dbReference type="GO" id="GO:0006054">
    <property type="term" value="P:N-acetylneuraminate metabolic process"/>
    <property type="evidence" value="ECO:0000266"/>
    <property type="project" value="RGD"/>
</dbReference>
<dbReference type="CDD" id="cd04305">
    <property type="entry name" value="HAD_Neu5Ac-Pase_like"/>
    <property type="match status" value="1"/>
</dbReference>
<dbReference type="FunFam" id="1.20.120.710:FF:000001">
    <property type="entry name" value="N-acylneuraminate-9-phosphatase"/>
    <property type="match status" value="1"/>
</dbReference>
<dbReference type="FunFam" id="3.40.50.1000:FF:000116">
    <property type="entry name" value="N-acylneuraminate-9-phosphatase"/>
    <property type="match status" value="1"/>
</dbReference>
<dbReference type="Gene3D" id="3.40.50.1000">
    <property type="entry name" value="HAD superfamily/HAD-like"/>
    <property type="match status" value="1"/>
</dbReference>
<dbReference type="Gene3D" id="1.20.120.710">
    <property type="entry name" value="Haloacid dehalogenase hydrolase-like domain"/>
    <property type="match status" value="1"/>
</dbReference>
<dbReference type="InterPro" id="IPR051400">
    <property type="entry name" value="HAD-like_hydrolase"/>
</dbReference>
<dbReference type="InterPro" id="IPR036412">
    <property type="entry name" value="HAD-like_sf"/>
</dbReference>
<dbReference type="InterPro" id="IPR006439">
    <property type="entry name" value="HAD-SF_hydro_IA"/>
</dbReference>
<dbReference type="InterPro" id="IPR011950">
    <property type="entry name" value="HAD-SF_hydro_IA_CTE7"/>
</dbReference>
<dbReference type="InterPro" id="IPR023214">
    <property type="entry name" value="HAD_sf"/>
</dbReference>
<dbReference type="NCBIfam" id="TIGR02253">
    <property type="entry name" value="CTE7"/>
    <property type="match status" value="1"/>
</dbReference>
<dbReference type="NCBIfam" id="TIGR01549">
    <property type="entry name" value="HAD-SF-IA-v1"/>
    <property type="match status" value="1"/>
</dbReference>
<dbReference type="PANTHER" id="PTHR46470">
    <property type="entry name" value="N-ACYLNEURAMINATE-9-PHOSPHATASE"/>
    <property type="match status" value="1"/>
</dbReference>
<dbReference type="PANTHER" id="PTHR46470:SF3">
    <property type="entry name" value="N-ACYLNEURAMINATE-9-PHOSPHATASE"/>
    <property type="match status" value="1"/>
</dbReference>
<dbReference type="Pfam" id="PF00702">
    <property type="entry name" value="Hydrolase"/>
    <property type="match status" value="1"/>
</dbReference>
<dbReference type="PRINTS" id="PR00413">
    <property type="entry name" value="HADHALOGNASE"/>
</dbReference>
<dbReference type="SFLD" id="SFLDG01135">
    <property type="entry name" value="C1.5.6:_HAD__Beta-PGM__Phospha"/>
    <property type="match status" value="1"/>
</dbReference>
<dbReference type="SFLD" id="SFLDS00003">
    <property type="entry name" value="Haloacid_Dehalogenase"/>
    <property type="match status" value="1"/>
</dbReference>
<dbReference type="SUPFAM" id="SSF56784">
    <property type="entry name" value="HAD-like"/>
    <property type="match status" value="1"/>
</dbReference>
<protein>
    <recommendedName>
        <fullName>N-acylneuraminate-9-phosphatase</fullName>
        <ecNumber evidence="2">3.1.3.29</ecNumber>
    </recommendedName>
    <alternativeName>
        <fullName evidence="1">Haloacid dehalogenase-like hydrolase domain-containing protein 4</fullName>
    </alternativeName>
    <alternativeName>
        <fullName evidence="3">N-acetylneuraminate-9-phosphate phosphatase</fullName>
    </alternativeName>
    <alternativeName>
        <fullName>Neu5Ac-9-Pase</fullName>
    </alternativeName>
</protein>
<keyword id="KW-0119">Carbohydrate metabolism</keyword>
<keyword id="KW-0378">Hydrolase</keyword>
<keyword id="KW-0460">Magnesium</keyword>
<keyword id="KW-0479">Metal-binding</keyword>
<keyword id="KW-1185">Reference proteome</keyword>
<sequence>MGLSRVRAVFFDLDNTLIDTAGASRRGMLEVIKLLQSKYHYKEEAEVICDKVQVKLSKECFHPYSTCITDVRTSHWEEAIQETKGGADNRKLAEECYFLWKSTRLQHMTLEEDVKAMLTELRKEVRLLLLTNGDRQTQREKIEACACQSYFDAIVVGGEQKEEKPAPSIFYHCCDLLGVQPGDCVMVGDTLETDIQGGLNAGLKATVWINKSGGVPLTSSPMPHYMVSSVLELPALLQSIDCKVSMSV</sequence>
<name>NANP_RAT</name>
<organism>
    <name type="scientific">Rattus norvegicus</name>
    <name type="common">Rat</name>
    <dbReference type="NCBI Taxonomy" id="10116"/>
    <lineage>
        <taxon>Eukaryota</taxon>
        <taxon>Metazoa</taxon>
        <taxon>Chordata</taxon>
        <taxon>Craniata</taxon>
        <taxon>Vertebrata</taxon>
        <taxon>Euteleostomi</taxon>
        <taxon>Mammalia</taxon>
        <taxon>Eutheria</taxon>
        <taxon>Euarchontoglires</taxon>
        <taxon>Glires</taxon>
        <taxon>Rodentia</taxon>
        <taxon>Myomorpha</taxon>
        <taxon>Muroidea</taxon>
        <taxon>Muridae</taxon>
        <taxon>Murinae</taxon>
        <taxon>Rattus</taxon>
    </lineage>
</organism>
<proteinExistence type="evidence at protein level"/>